<proteinExistence type="inferred from homology"/>
<keyword id="KW-0131">Cell cycle</keyword>
<keyword id="KW-0132">Cell division</keyword>
<keyword id="KW-0997">Cell inner membrane</keyword>
<keyword id="KW-1003">Cell membrane</keyword>
<keyword id="KW-0133">Cell shape</keyword>
<keyword id="KW-0961">Cell wall biogenesis/degradation</keyword>
<keyword id="KW-0460">Magnesium</keyword>
<keyword id="KW-0472">Membrane</keyword>
<keyword id="KW-0479">Metal-binding</keyword>
<keyword id="KW-0573">Peptidoglycan synthesis</keyword>
<keyword id="KW-0808">Transferase</keyword>
<keyword id="KW-0812">Transmembrane</keyword>
<keyword id="KW-1133">Transmembrane helix</keyword>
<sequence>MFCFLGLRLLKYITFRTAYATIFAFLLALIFGPFIISRLKKLKLDQILRKDGPKHHLSEKMGIPTMGGVLIFFCVLVSLFFWIHFFNIYFLIVLFVMVSFACLGFTDDLLKIKRKNSDGLNPKFKIYGQILFSFISVVMLYYFGGEHVSILYFPFFKSLKLDLGILYIPFGMFVLISASNSFNLTDGLDGLAIGLSIVVIGALIIIAYLTSRVDFALYLNIPNVKGCEELVIFLGALLGGSFGFLWFNAYPAKIMMGDTGSLSIGAVLGMVALILKSEILFAILAGVFVVETLSVIIQVVVYKKTKKRVFKMAPLHHHFEELGWSEMQVVIRFWIIGLIFAILALSTIKIR</sequence>
<accession>B5RRC2</accession>
<dbReference type="EC" id="2.7.8.13" evidence="1"/>
<dbReference type="EMBL" id="CP000993">
    <property type="protein sequence ID" value="ACH94556.1"/>
    <property type="molecule type" value="Genomic_DNA"/>
</dbReference>
<dbReference type="RefSeq" id="WP_012538808.1">
    <property type="nucleotide sequence ID" value="NC_011244.1"/>
</dbReference>
<dbReference type="SMR" id="B5RRC2"/>
<dbReference type="KEGG" id="bre:BRE_310"/>
<dbReference type="HOGENOM" id="CLU_023982_0_0_12"/>
<dbReference type="UniPathway" id="UPA00219"/>
<dbReference type="Proteomes" id="UP000000612">
    <property type="component" value="Chromosome"/>
</dbReference>
<dbReference type="GO" id="GO:0005886">
    <property type="term" value="C:plasma membrane"/>
    <property type="evidence" value="ECO:0007669"/>
    <property type="project" value="UniProtKB-SubCell"/>
</dbReference>
<dbReference type="GO" id="GO:0046872">
    <property type="term" value="F:metal ion binding"/>
    <property type="evidence" value="ECO:0007669"/>
    <property type="project" value="UniProtKB-KW"/>
</dbReference>
<dbReference type="GO" id="GO:0008963">
    <property type="term" value="F:phospho-N-acetylmuramoyl-pentapeptide-transferase activity"/>
    <property type="evidence" value="ECO:0007669"/>
    <property type="project" value="UniProtKB-UniRule"/>
</dbReference>
<dbReference type="GO" id="GO:0051992">
    <property type="term" value="F:UDP-N-acetylmuramoyl-L-alanyl-D-glutamyl-meso-2,6-diaminopimelyl-D-alanyl-D-alanine:undecaprenyl-phosphate transferase activity"/>
    <property type="evidence" value="ECO:0007669"/>
    <property type="project" value="RHEA"/>
</dbReference>
<dbReference type="GO" id="GO:0051301">
    <property type="term" value="P:cell division"/>
    <property type="evidence" value="ECO:0007669"/>
    <property type="project" value="UniProtKB-KW"/>
</dbReference>
<dbReference type="GO" id="GO:0071555">
    <property type="term" value="P:cell wall organization"/>
    <property type="evidence" value="ECO:0007669"/>
    <property type="project" value="UniProtKB-KW"/>
</dbReference>
<dbReference type="GO" id="GO:0009252">
    <property type="term" value="P:peptidoglycan biosynthetic process"/>
    <property type="evidence" value="ECO:0007669"/>
    <property type="project" value="UniProtKB-UniRule"/>
</dbReference>
<dbReference type="GO" id="GO:0008360">
    <property type="term" value="P:regulation of cell shape"/>
    <property type="evidence" value="ECO:0007669"/>
    <property type="project" value="UniProtKB-KW"/>
</dbReference>
<dbReference type="CDD" id="cd06852">
    <property type="entry name" value="GT_MraY"/>
    <property type="match status" value="1"/>
</dbReference>
<dbReference type="HAMAP" id="MF_00038">
    <property type="entry name" value="MraY"/>
    <property type="match status" value="1"/>
</dbReference>
<dbReference type="InterPro" id="IPR000715">
    <property type="entry name" value="Glycosyl_transferase_4"/>
</dbReference>
<dbReference type="InterPro" id="IPR003524">
    <property type="entry name" value="PNAcMuramoyl-5peptid_Trfase"/>
</dbReference>
<dbReference type="InterPro" id="IPR018480">
    <property type="entry name" value="PNAcMuramoyl-5peptid_Trfase_CS"/>
</dbReference>
<dbReference type="NCBIfam" id="TIGR00445">
    <property type="entry name" value="mraY"/>
    <property type="match status" value="1"/>
</dbReference>
<dbReference type="PANTHER" id="PTHR22926">
    <property type="entry name" value="PHOSPHO-N-ACETYLMURAMOYL-PENTAPEPTIDE-TRANSFERASE"/>
    <property type="match status" value="1"/>
</dbReference>
<dbReference type="PANTHER" id="PTHR22926:SF5">
    <property type="entry name" value="PHOSPHO-N-ACETYLMURAMOYL-PENTAPEPTIDE-TRANSFERASE HOMOLOG"/>
    <property type="match status" value="1"/>
</dbReference>
<dbReference type="Pfam" id="PF00953">
    <property type="entry name" value="Glycos_transf_4"/>
    <property type="match status" value="1"/>
</dbReference>
<dbReference type="PROSITE" id="PS01347">
    <property type="entry name" value="MRAY_1"/>
    <property type="match status" value="1"/>
</dbReference>
<dbReference type="PROSITE" id="PS01348">
    <property type="entry name" value="MRAY_2"/>
    <property type="match status" value="1"/>
</dbReference>
<reference key="1">
    <citation type="journal article" date="2008" name="PLoS Genet.">
        <title>The genome of Borrelia recurrentis, the agent of deadly louse-borne relapsing fever, is a degraded subset of tick-borne Borrelia duttonii.</title>
        <authorList>
            <person name="Lescot M."/>
            <person name="Audic S."/>
            <person name="Robert C."/>
            <person name="Nguyen T.T."/>
            <person name="Blanc G."/>
            <person name="Cutler S.J."/>
            <person name="Wincker P."/>
            <person name="Couloux A."/>
            <person name="Claverie J.-M."/>
            <person name="Raoult D."/>
            <person name="Drancourt M."/>
        </authorList>
    </citation>
    <scope>NUCLEOTIDE SEQUENCE [LARGE SCALE GENOMIC DNA]</scope>
    <source>
        <strain>A1</strain>
    </source>
</reference>
<protein>
    <recommendedName>
        <fullName evidence="1">Phospho-N-acetylmuramoyl-pentapeptide-transferase</fullName>
        <ecNumber evidence="1">2.7.8.13</ecNumber>
    </recommendedName>
    <alternativeName>
        <fullName evidence="1">UDP-MurNAc-pentapeptide phosphotransferase</fullName>
    </alternativeName>
</protein>
<feature type="chain" id="PRO_1000090597" description="Phospho-N-acetylmuramoyl-pentapeptide-transferase">
    <location>
        <begin position="1"/>
        <end position="351"/>
    </location>
</feature>
<feature type="transmembrane region" description="Helical" evidence="1">
    <location>
        <begin position="17"/>
        <end position="37"/>
    </location>
</feature>
<feature type="transmembrane region" description="Helical" evidence="1">
    <location>
        <begin position="61"/>
        <end position="83"/>
    </location>
</feature>
<feature type="transmembrane region" description="Helical" evidence="1">
    <location>
        <begin position="88"/>
        <end position="105"/>
    </location>
</feature>
<feature type="transmembrane region" description="Helical" evidence="1">
    <location>
        <begin position="130"/>
        <end position="150"/>
    </location>
</feature>
<feature type="transmembrane region" description="Helical" evidence="1">
    <location>
        <begin position="158"/>
        <end position="178"/>
    </location>
</feature>
<feature type="transmembrane region" description="Helical" evidence="1">
    <location>
        <begin position="190"/>
        <end position="210"/>
    </location>
</feature>
<feature type="transmembrane region" description="Helical" evidence="1">
    <location>
        <begin position="230"/>
        <end position="250"/>
    </location>
</feature>
<feature type="transmembrane region" description="Helical" evidence="1">
    <location>
        <begin position="254"/>
        <end position="274"/>
    </location>
</feature>
<feature type="transmembrane region" description="Helical" evidence="1">
    <location>
        <begin position="279"/>
        <end position="299"/>
    </location>
</feature>
<feature type="transmembrane region" description="Helical" evidence="1">
    <location>
        <begin position="328"/>
        <end position="348"/>
    </location>
</feature>
<name>MRAY_BORRA</name>
<gene>
    <name evidence="1" type="primary">mraY</name>
    <name type="ordered locus">BRE_310</name>
</gene>
<organism>
    <name type="scientific">Borrelia recurrentis (strain A1)</name>
    <dbReference type="NCBI Taxonomy" id="412418"/>
    <lineage>
        <taxon>Bacteria</taxon>
        <taxon>Pseudomonadati</taxon>
        <taxon>Spirochaetota</taxon>
        <taxon>Spirochaetia</taxon>
        <taxon>Spirochaetales</taxon>
        <taxon>Borreliaceae</taxon>
        <taxon>Borrelia</taxon>
    </lineage>
</organism>
<comment type="function">
    <text evidence="1">Catalyzes the initial step of the lipid cycle reactions in the biosynthesis of the cell wall peptidoglycan: transfers peptidoglycan precursor phospho-MurNAc-pentapeptide from UDP-MurNAc-pentapeptide onto the lipid carrier undecaprenyl phosphate, yielding undecaprenyl-pyrophosphoryl-MurNAc-pentapeptide, known as lipid I.</text>
</comment>
<comment type="catalytic activity">
    <reaction evidence="1">
        <text>UDP-N-acetyl-alpha-D-muramoyl-L-alanyl-gamma-D-glutamyl-meso-2,6-diaminopimeloyl-D-alanyl-D-alanine + di-trans,octa-cis-undecaprenyl phosphate = di-trans,octa-cis-undecaprenyl diphospho-N-acetyl-alpha-D-muramoyl-L-alanyl-D-glutamyl-meso-2,6-diaminopimeloyl-D-alanyl-D-alanine + UMP</text>
        <dbReference type="Rhea" id="RHEA:28386"/>
        <dbReference type="ChEBI" id="CHEBI:57865"/>
        <dbReference type="ChEBI" id="CHEBI:60392"/>
        <dbReference type="ChEBI" id="CHEBI:61386"/>
        <dbReference type="ChEBI" id="CHEBI:61387"/>
        <dbReference type="EC" id="2.7.8.13"/>
    </reaction>
</comment>
<comment type="cofactor">
    <cofactor evidence="1">
        <name>Mg(2+)</name>
        <dbReference type="ChEBI" id="CHEBI:18420"/>
    </cofactor>
</comment>
<comment type="pathway">
    <text evidence="1">Cell wall biogenesis; peptidoglycan biosynthesis.</text>
</comment>
<comment type="subcellular location">
    <subcellularLocation>
        <location evidence="1">Cell inner membrane</location>
        <topology evidence="1">Multi-pass membrane protein</topology>
    </subcellularLocation>
</comment>
<comment type="similarity">
    <text evidence="1">Belongs to the glycosyltransferase 4 family. MraY subfamily.</text>
</comment>
<evidence type="ECO:0000255" key="1">
    <source>
        <dbReference type="HAMAP-Rule" id="MF_00038"/>
    </source>
</evidence>